<comment type="similarity">
    <text evidence="1">Belongs to the UPF0260 family.</text>
</comment>
<comment type="sequence caution" evidence="2">
    <conflict type="erroneous initiation">
        <sequence resource="EMBL-CDS" id="AAN80094"/>
    </conflict>
</comment>
<name>YCGN_ECOL6</name>
<accession>Q8FI28</accession>
<sequence length="153" mass="17852">MAEHLMSDVPFWQSKTLDEMSDAEWESLCDGCGQCCLHKLMDEDTDEIYFTNVACRQLNIKTCQCRNYERRFEFEPDCIKLTRENLPTFEWLPMTCAYRLLAEGKGLPAWHPLLTGSKAAMHGERISVRHIAVKESEVIDWQDHILNKPDWAQ</sequence>
<organism>
    <name type="scientific">Escherichia coli O6:H1 (strain CFT073 / ATCC 700928 / UPEC)</name>
    <dbReference type="NCBI Taxonomy" id="199310"/>
    <lineage>
        <taxon>Bacteria</taxon>
        <taxon>Pseudomonadati</taxon>
        <taxon>Pseudomonadota</taxon>
        <taxon>Gammaproteobacteria</taxon>
        <taxon>Enterobacterales</taxon>
        <taxon>Enterobacteriaceae</taxon>
        <taxon>Escherichia</taxon>
    </lineage>
</organism>
<gene>
    <name evidence="1" type="primary">ycgN</name>
    <name type="ordered locus">c1629</name>
</gene>
<feature type="chain" id="PRO_0000214581" description="UPF0260 protein YcgN">
    <location>
        <begin position="1"/>
        <end position="153"/>
    </location>
</feature>
<evidence type="ECO:0000255" key="1">
    <source>
        <dbReference type="HAMAP-Rule" id="MF_00676"/>
    </source>
</evidence>
<evidence type="ECO:0000305" key="2"/>
<keyword id="KW-1185">Reference proteome</keyword>
<protein>
    <recommendedName>
        <fullName evidence="1">UPF0260 protein YcgN</fullName>
    </recommendedName>
</protein>
<reference key="1">
    <citation type="journal article" date="2002" name="Proc. Natl. Acad. Sci. U.S.A.">
        <title>Extensive mosaic structure revealed by the complete genome sequence of uropathogenic Escherichia coli.</title>
        <authorList>
            <person name="Welch R.A."/>
            <person name="Burland V."/>
            <person name="Plunkett G. III"/>
            <person name="Redford P."/>
            <person name="Roesch P."/>
            <person name="Rasko D."/>
            <person name="Buckles E.L."/>
            <person name="Liou S.-R."/>
            <person name="Boutin A."/>
            <person name="Hackett J."/>
            <person name="Stroud D."/>
            <person name="Mayhew G.F."/>
            <person name="Rose D.J."/>
            <person name="Zhou S."/>
            <person name="Schwartz D.C."/>
            <person name="Perna N.T."/>
            <person name="Mobley H.L.T."/>
            <person name="Donnenberg M.S."/>
            <person name="Blattner F.R."/>
        </authorList>
    </citation>
    <scope>NUCLEOTIDE SEQUENCE [LARGE SCALE GENOMIC DNA]</scope>
    <source>
        <strain>CFT073 / ATCC 700928 / UPEC</strain>
    </source>
</reference>
<dbReference type="EMBL" id="AE014075">
    <property type="protein sequence ID" value="AAN80094.1"/>
    <property type="status" value="ALT_INIT"/>
    <property type="molecule type" value="Genomic_DNA"/>
</dbReference>
<dbReference type="STRING" id="199310.c1629"/>
<dbReference type="KEGG" id="ecc:c1629"/>
<dbReference type="eggNOG" id="COG2983">
    <property type="taxonomic scope" value="Bacteria"/>
</dbReference>
<dbReference type="HOGENOM" id="CLU_109769_2_0_6"/>
<dbReference type="Proteomes" id="UP000001410">
    <property type="component" value="Chromosome"/>
</dbReference>
<dbReference type="HAMAP" id="MF_00676">
    <property type="entry name" value="UPF0260"/>
    <property type="match status" value="1"/>
</dbReference>
<dbReference type="InterPro" id="IPR005358">
    <property type="entry name" value="Puta_zinc/iron-chelating_dom"/>
</dbReference>
<dbReference type="InterPro" id="IPR008228">
    <property type="entry name" value="UCP006173"/>
</dbReference>
<dbReference type="NCBIfam" id="NF003498">
    <property type="entry name" value="PRK05170.1-1"/>
    <property type="match status" value="1"/>
</dbReference>
<dbReference type="NCBIfam" id="NF003501">
    <property type="entry name" value="PRK05170.1-5"/>
    <property type="match status" value="1"/>
</dbReference>
<dbReference type="NCBIfam" id="NF003503">
    <property type="entry name" value="PRK05170.2-1"/>
    <property type="match status" value="1"/>
</dbReference>
<dbReference type="NCBIfam" id="NF003507">
    <property type="entry name" value="PRK05170.2-5"/>
    <property type="match status" value="1"/>
</dbReference>
<dbReference type="PANTHER" id="PTHR37421">
    <property type="entry name" value="UPF0260 PROTEIN YCGN"/>
    <property type="match status" value="1"/>
</dbReference>
<dbReference type="PANTHER" id="PTHR37421:SF1">
    <property type="entry name" value="UPF0260 PROTEIN YCGN"/>
    <property type="match status" value="1"/>
</dbReference>
<dbReference type="Pfam" id="PF03692">
    <property type="entry name" value="CxxCxxCC"/>
    <property type="match status" value="1"/>
</dbReference>
<dbReference type="PIRSF" id="PIRSF006173">
    <property type="entry name" value="UCP006173"/>
    <property type="match status" value="1"/>
</dbReference>
<proteinExistence type="inferred from homology"/>